<protein>
    <recommendedName>
        <fullName evidence="6">Nigrocin-2GRa</fullName>
    </recommendedName>
    <alternativeName>
        <fullName evidence="5">Grahamin-1</fullName>
    </alternativeName>
</protein>
<feature type="signal peptide" evidence="2">
    <location>
        <begin position="1"/>
        <end position="22"/>
    </location>
</feature>
<feature type="propeptide" id="PRO_0000273289" evidence="7">
    <location>
        <begin position="23"/>
        <end position="45"/>
    </location>
</feature>
<feature type="peptide" id="PRO_0000273290" description="Nigrocin-2GRa" evidence="3 4">
    <location>
        <begin position="46"/>
        <end position="66"/>
    </location>
</feature>
<feature type="disulfide bond" evidence="1">
    <location>
        <begin position="60"/>
        <end position="66"/>
    </location>
</feature>
<keyword id="KW-0878">Amphibian defense peptide</keyword>
<keyword id="KW-0044">Antibiotic</keyword>
<keyword id="KW-0929">Antimicrobial</keyword>
<keyword id="KW-0165">Cleavage on pair of basic residues</keyword>
<keyword id="KW-0903">Direct protein sequencing</keyword>
<keyword id="KW-1015">Disulfide bond</keyword>
<keyword id="KW-0964">Secreted</keyword>
<keyword id="KW-0732">Signal</keyword>
<organism evidence="5">
    <name type="scientific">Odorrana grahami</name>
    <name type="common">Yunnanfu frog</name>
    <name type="synonym">Rana grahami</name>
    <dbReference type="NCBI Taxonomy" id="167935"/>
    <lineage>
        <taxon>Eukaryota</taxon>
        <taxon>Metazoa</taxon>
        <taxon>Chordata</taxon>
        <taxon>Craniata</taxon>
        <taxon>Vertebrata</taxon>
        <taxon>Euteleostomi</taxon>
        <taxon>Amphibia</taxon>
        <taxon>Batrachia</taxon>
        <taxon>Anura</taxon>
        <taxon>Neobatrachia</taxon>
        <taxon>Ranoidea</taxon>
        <taxon>Ranidae</taxon>
        <taxon>Odorrana</taxon>
    </lineage>
</organism>
<comment type="function">
    <text evidence="3 4">Antimicrobial peptide active at least against the Gram-positive bacterium S.aureus but with otherwise unclear activity spectrum (PubMed:16487561, PubMed:16621155). Lacks hemolytic activity against rabbit or human erythrocytes (PubMed:16487561, PubMed:16621155).</text>
</comment>
<comment type="subcellular location">
    <subcellularLocation>
        <location evidence="3">Secreted</location>
    </subcellularLocation>
</comment>
<comment type="tissue specificity">
    <text evidence="8">Expressed by the skin glands.</text>
</comment>
<comment type="mass spectrometry"/>
<comment type="mass spectrometry"/>
<comment type="similarity">
    <text evidence="7">Belongs to the frog skin active peptide (FSAP) family. Brevinin subfamily.</text>
</comment>
<reference evidence="7" key="1">
    <citation type="journal article" date="2006" name="Toxicon">
        <title>Two antimicrobial peptides from skin secretions of Rana grahami.</title>
        <authorList>
            <person name="Xu X."/>
            <person name="Li J."/>
            <person name="Han Y."/>
            <person name="Yang H."/>
            <person name="Liang J."/>
            <person name="Lu Q."/>
            <person name="Lai R."/>
        </authorList>
    </citation>
    <scope>NUCLEOTIDE SEQUENCE [MRNA]</scope>
    <scope>PROTEIN SEQUENCE OF 46-66</scope>
    <scope>FUNCTION</scope>
    <scope>SUBCELLULAR LOCATION</scope>
    <scope>MASS SPECTROMETRY</scope>
    <source>
        <tissue evidence="3">Skin secretion</tissue>
    </source>
</reference>
<reference key="2">
    <citation type="journal article" date="2006" name="Peptides">
        <title>Antimicrobial peptides from diverse families isolated from the skin of the Asian frog, Rana grahami.</title>
        <authorList>
            <person name="Conlon J.M."/>
            <person name="Al-Ghaferi N."/>
            <person name="Abraham B."/>
            <person name="Jiansheng H."/>
            <person name="Cosette P."/>
            <person name="Leprince J."/>
            <person name="Jouenne T."/>
            <person name="Vaudry H."/>
        </authorList>
    </citation>
    <scope>PROTEIN SEQUENCE OF 46-66</scope>
    <scope>FUNCTION</scope>
    <scope>MASS SPECTROMETRY</scope>
    <source>
        <tissue evidence="6">Skin</tissue>
    </source>
</reference>
<dbReference type="GO" id="GO:0005576">
    <property type="term" value="C:extracellular region"/>
    <property type="evidence" value="ECO:0000314"/>
    <property type="project" value="UniProtKB"/>
</dbReference>
<dbReference type="GO" id="GO:0050829">
    <property type="term" value="P:defense response to Gram-negative bacterium"/>
    <property type="evidence" value="ECO:0000314"/>
    <property type="project" value="UniProtKB"/>
</dbReference>
<dbReference type="GO" id="GO:0050830">
    <property type="term" value="P:defense response to Gram-positive bacterium"/>
    <property type="evidence" value="ECO:0000314"/>
    <property type="project" value="UniProtKB"/>
</dbReference>
<dbReference type="InterPro" id="IPR004275">
    <property type="entry name" value="Frog_antimicrobial_propeptide"/>
</dbReference>
<dbReference type="InterPro" id="IPR032749">
    <property type="entry name" value="Nigrocin"/>
</dbReference>
<dbReference type="Pfam" id="PF16047">
    <property type="entry name" value="Antimicrobial22"/>
    <property type="match status" value="1"/>
</dbReference>
<dbReference type="Pfam" id="PF03032">
    <property type="entry name" value="FSAP_sig_propep"/>
    <property type="match status" value="1"/>
</dbReference>
<sequence>MFTLKKSQLLLFFPGTINLSLCQDETNAEEERRDEEVAKMEEIKRGLLSGILGAGKHIVCGLSGLC</sequence>
<proteinExistence type="evidence at protein level"/>
<accession>P85071</accession>
<accession>P0C2A5</accession>
<evidence type="ECO:0000250" key="1">
    <source>
        <dbReference type="UniProtKB" id="P39084"/>
    </source>
</evidence>
<evidence type="ECO:0000255" key="2"/>
<evidence type="ECO:0000269" key="3">
    <source>
    </source>
</evidence>
<evidence type="ECO:0000269" key="4">
    <source>
    </source>
</evidence>
<evidence type="ECO:0000303" key="5">
    <source>
    </source>
</evidence>
<evidence type="ECO:0000303" key="6">
    <source>
    </source>
</evidence>
<evidence type="ECO:0000305" key="7"/>
<evidence type="ECO:0000305" key="8">
    <source>
    </source>
</evidence>
<name>NIG2A_ODOGR</name>